<sequence>MKVAIIGATGYGGIELIRLLQQHPYFSIVSIHSFSQVGEHITSSYPHLRRFLVYTLQEIDVESIKKEADLVFLATPAGVSVKLTPLLLKAGLKVIDLSGDFRMVNPSIYEMWYKKPAASEEFLQQAVYGLSEWKRDEIQQAKLVANPGCFATATLLAIAPLMRNKIIEENSIIIDAKSGVSGAGKTPTHAAHFPELYDNLHIYKVNEHQHIPEIEQMLIGWNEQAKPITFSTHLIPVSRGIMVTLYAKIRKYVQIEELHNLYTNIYKNAYFVRIRPYGEFPSIKEVRGSNYCDIGIGYDERTKRITVVAVIDNMMKGAAGQAVQNANLVARLDEKTGLQYIPIYP</sequence>
<reference key="1">
    <citation type="journal article" date="2008" name="Chem. Biol. Interact.">
        <title>Extending the Bacillus cereus group genomics to putative food-borne pathogens of different toxicity.</title>
        <authorList>
            <person name="Lapidus A."/>
            <person name="Goltsman E."/>
            <person name="Auger S."/>
            <person name="Galleron N."/>
            <person name="Segurens B."/>
            <person name="Dossat C."/>
            <person name="Land M.L."/>
            <person name="Broussolle V."/>
            <person name="Brillard J."/>
            <person name="Guinebretiere M.-H."/>
            <person name="Sanchis V."/>
            <person name="Nguen-the C."/>
            <person name="Lereclus D."/>
            <person name="Richardson P."/>
            <person name="Wincker P."/>
            <person name="Weissenbach J."/>
            <person name="Ehrlich S.D."/>
            <person name="Sorokin A."/>
        </authorList>
    </citation>
    <scope>NUCLEOTIDE SEQUENCE [LARGE SCALE GENOMIC DNA]</scope>
    <source>
        <strain>DSM 22905 / CIP 110041 / 391-98 / NVH 391-98</strain>
    </source>
</reference>
<proteinExistence type="inferred from homology"/>
<organism>
    <name type="scientific">Bacillus cytotoxicus (strain DSM 22905 / CIP 110041 / 391-98 / NVH 391-98)</name>
    <dbReference type="NCBI Taxonomy" id="315749"/>
    <lineage>
        <taxon>Bacteria</taxon>
        <taxon>Bacillati</taxon>
        <taxon>Bacillota</taxon>
        <taxon>Bacilli</taxon>
        <taxon>Bacillales</taxon>
        <taxon>Bacillaceae</taxon>
        <taxon>Bacillus</taxon>
        <taxon>Bacillus cereus group</taxon>
    </lineage>
</organism>
<accession>A7GSF4</accession>
<gene>
    <name evidence="1" type="primary">argC</name>
    <name type="ordered locus">Bcer98_2829</name>
</gene>
<dbReference type="EC" id="1.2.1.38" evidence="1"/>
<dbReference type="EMBL" id="CP000764">
    <property type="protein sequence ID" value="ABS23062.1"/>
    <property type="molecule type" value="Genomic_DNA"/>
</dbReference>
<dbReference type="RefSeq" id="WP_012095289.1">
    <property type="nucleotide sequence ID" value="NC_009674.1"/>
</dbReference>
<dbReference type="SMR" id="A7GSF4"/>
<dbReference type="STRING" id="315749.Bcer98_2829"/>
<dbReference type="GeneID" id="33898084"/>
<dbReference type="KEGG" id="bcy:Bcer98_2829"/>
<dbReference type="eggNOG" id="COG0002">
    <property type="taxonomic scope" value="Bacteria"/>
</dbReference>
<dbReference type="HOGENOM" id="CLU_006384_0_1_9"/>
<dbReference type="OrthoDB" id="9801289at2"/>
<dbReference type="UniPathway" id="UPA00068">
    <property type="reaction ID" value="UER00108"/>
</dbReference>
<dbReference type="Proteomes" id="UP000002300">
    <property type="component" value="Chromosome"/>
</dbReference>
<dbReference type="GO" id="GO:0005737">
    <property type="term" value="C:cytoplasm"/>
    <property type="evidence" value="ECO:0007669"/>
    <property type="project" value="UniProtKB-SubCell"/>
</dbReference>
<dbReference type="GO" id="GO:0003942">
    <property type="term" value="F:N-acetyl-gamma-glutamyl-phosphate reductase activity"/>
    <property type="evidence" value="ECO:0007669"/>
    <property type="project" value="UniProtKB-UniRule"/>
</dbReference>
<dbReference type="GO" id="GO:0051287">
    <property type="term" value="F:NAD binding"/>
    <property type="evidence" value="ECO:0007669"/>
    <property type="project" value="InterPro"/>
</dbReference>
<dbReference type="GO" id="GO:0070401">
    <property type="term" value="F:NADP+ binding"/>
    <property type="evidence" value="ECO:0007669"/>
    <property type="project" value="InterPro"/>
</dbReference>
<dbReference type="GO" id="GO:0006526">
    <property type="term" value="P:L-arginine biosynthetic process"/>
    <property type="evidence" value="ECO:0007669"/>
    <property type="project" value="UniProtKB-UniRule"/>
</dbReference>
<dbReference type="CDD" id="cd23934">
    <property type="entry name" value="AGPR_1_C"/>
    <property type="match status" value="1"/>
</dbReference>
<dbReference type="CDD" id="cd17895">
    <property type="entry name" value="AGPR_1_N"/>
    <property type="match status" value="1"/>
</dbReference>
<dbReference type="FunFam" id="3.30.360.10:FF:000014">
    <property type="entry name" value="N-acetyl-gamma-glutamyl-phosphate reductase"/>
    <property type="match status" value="1"/>
</dbReference>
<dbReference type="Gene3D" id="3.30.360.10">
    <property type="entry name" value="Dihydrodipicolinate Reductase, domain 2"/>
    <property type="match status" value="1"/>
</dbReference>
<dbReference type="Gene3D" id="3.40.50.720">
    <property type="entry name" value="NAD(P)-binding Rossmann-like Domain"/>
    <property type="match status" value="1"/>
</dbReference>
<dbReference type="HAMAP" id="MF_00150">
    <property type="entry name" value="ArgC_type1"/>
    <property type="match status" value="1"/>
</dbReference>
<dbReference type="InterPro" id="IPR023013">
    <property type="entry name" value="AGPR_AS"/>
</dbReference>
<dbReference type="InterPro" id="IPR000706">
    <property type="entry name" value="AGPR_type-1"/>
</dbReference>
<dbReference type="InterPro" id="IPR036291">
    <property type="entry name" value="NAD(P)-bd_dom_sf"/>
</dbReference>
<dbReference type="InterPro" id="IPR050085">
    <property type="entry name" value="NAGSA_dehydrogenase"/>
</dbReference>
<dbReference type="InterPro" id="IPR000534">
    <property type="entry name" value="Semialdehyde_DH_NAD-bd"/>
</dbReference>
<dbReference type="NCBIfam" id="TIGR01850">
    <property type="entry name" value="argC"/>
    <property type="match status" value="1"/>
</dbReference>
<dbReference type="PANTHER" id="PTHR32338:SF10">
    <property type="entry name" value="N-ACETYL-GAMMA-GLUTAMYL-PHOSPHATE REDUCTASE, CHLOROPLASTIC-RELATED"/>
    <property type="match status" value="1"/>
</dbReference>
<dbReference type="PANTHER" id="PTHR32338">
    <property type="entry name" value="N-ACETYL-GAMMA-GLUTAMYL-PHOSPHATE REDUCTASE, CHLOROPLASTIC-RELATED-RELATED"/>
    <property type="match status" value="1"/>
</dbReference>
<dbReference type="Pfam" id="PF01118">
    <property type="entry name" value="Semialdhyde_dh"/>
    <property type="match status" value="1"/>
</dbReference>
<dbReference type="Pfam" id="PF22698">
    <property type="entry name" value="Semialdhyde_dhC_1"/>
    <property type="match status" value="1"/>
</dbReference>
<dbReference type="PIRSF" id="PIRSF000148">
    <property type="entry name" value="ASA_dh"/>
    <property type="match status" value="1"/>
</dbReference>
<dbReference type="SMART" id="SM00859">
    <property type="entry name" value="Semialdhyde_dh"/>
    <property type="match status" value="1"/>
</dbReference>
<dbReference type="SUPFAM" id="SSF55347">
    <property type="entry name" value="Glyceraldehyde-3-phosphate dehydrogenase-like, C-terminal domain"/>
    <property type="match status" value="1"/>
</dbReference>
<dbReference type="SUPFAM" id="SSF51735">
    <property type="entry name" value="NAD(P)-binding Rossmann-fold domains"/>
    <property type="match status" value="1"/>
</dbReference>
<dbReference type="PROSITE" id="PS01224">
    <property type="entry name" value="ARGC"/>
    <property type="match status" value="1"/>
</dbReference>
<protein>
    <recommendedName>
        <fullName evidence="1">N-acetyl-gamma-glutamyl-phosphate reductase</fullName>
        <shortName evidence="1">AGPR</shortName>
        <ecNumber evidence="1">1.2.1.38</ecNumber>
    </recommendedName>
    <alternativeName>
        <fullName evidence="1">N-acetyl-glutamate semialdehyde dehydrogenase</fullName>
        <shortName evidence="1">NAGSA dehydrogenase</shortName>
    </alternativeName>
</protein>
<comment type="function">
    <text evidence="1">Catalyzes the NADPH-dependent reduction of N-acetyl-5-glutamyl phosphate to yield N-acetyl-L-glutamate 5-semialdehyde.</text>
</comment>
<comment type="catalytic activity">
    <reaction evidence="1">
        <text>N-acetyl-L-glutamate 5-semialdehyde + phosphate + NADP(+) = N-acetyl-L-glutamyl 5-phosphate + NADPH + H(+)</text>
        <dbReference type="Rhea" id="RHEA:21588"/>
        <dbReference type="ChEBI" id="CHEBI:15378"/>
        <dbReference type="ChEBI" id="CHEBI:29123"/>
        <dbReference type="ChEBI" id="CHEBI:43474"/>
        <dbReference type="ChEBI" id="CHEBI:57783"/>
        <dbReference type="ChEBI" id="CHEBI:57936"/>
        <dbReference type="ChEBI" id="CHEBI:58349"/>
        <dbReference type="EC" id="1.2.1.38"/>
    </reaction>
</comment>
<comment type="pathway">
    <text evidence="1">Amino-acid biosynthesis; L-arginine biosynthesis; N(2)-acetyl-L-ornithine from L-glutamate: step 3/4.</text>
</comment>
<comment type="subcellular location">
    <subcellularLocation>
        <location evidence="1">Cytoplasm</location>
    </subcellularLocation>
</comment>
<comment type="similarity">
    <text evidence="1">Belongs to the NAGSA dehydrogenase family. Type 1 subfamily.</text>
</comment>
<keyword id="KW-0028">Amino-acid biosynthesis</keyword>
<keyword id="KW-0055">Arginine biosynthesis</keyword>
<keyword id="KW-0963">Cytoplasm</keyword>
<keyword id="KW-0521">NADP</keyword>
<keyword id="KW-0560">Oxidoreductase</keyword>
<feature type="chain" id="PRO_1000076726" description="N-acetyl-gamma-glutamyl-phosphate reductase">
    <location>
        <begin position="1"/>
        <end position="345"/>
    </location>
</feature>
<feature type="active site" evidence="1">
    <location>
        <position position="149"/>
    </location>
</feature>
<evidence type="ECO:0000255" key="1">
    <source>
        <dbReference type="HAMAP-Rule" id="MF_00150"/>
    </source>
</evidence>
<name>ARGC_BACCN</name>